<comment type="function">
    <text evidence="1">Transcription factor.</text>
</comment>
<comment type="subcellular location">
    <subcellularLocation>
        <location evidence="2">Nucleus</location>
    </subcellularLocation>
</comment>
<comment type="similarity">
    <text evidence="4">Belongs to the NK-2 homeobox family.</text>
</comment>
<comment type="sequence caution" evidence="4">
    <conflict type="miscellaneous discrepancy">
        <sequence resource="EMBL-CDS" id="AAH25788"/>
    </conflict>
    <text>The lack of 97 nucleotides within coding exon 2 produces a frameshift and results in a truncated protein.</text>
</comment>
<feature type="chain" id="PRO_0000048933" description="Homeobox protein Nkx-2.3">
    <location>
        <begin position="1"/>
        <end position="364"/>
    </location>
</feature>
<feature type="DNA-binding region" description="Homeobox" evidence="2">
    <location>
        <begin position="148"/>
        <end position="207"/>
    </location>
</feature>
<feature type="region of interest" description="Disordered" evidence="3">
    <location>
        <begin position="132"/>
        <end position="153"/>
    </location>
</feature>
<feature type="compositionally biased region" description="Basic and acidic residues" evidence="3">
    <location>
        <begin position="135"/>
        <end position="144"/>
    </location>
</feature>
<keyword id="KW-0238">DNA-binding</keyword>
<keyword id="KW-0371">Homeobox</keyword>
<keyword id="KW-0539">Nucleus</keyword>
<keyword id="KW-1267">Proteomics identification</keyword>
<keyword id="KW-1185">Reference proteome</keyword>
<keyword id="KW-0804">Transcription</keyword>
<keyword id="KW-0805">Transcription regulation</keyword>
<protein>
    <recommendedName>
        <fullName>Homeobox protein Nkx-2.3</fullName>
    </recommendedName>
    <alternativeName>
        <fullName>Homeobox protein NK-2 homolog C</fullName>
    </alternativeName>
</protein>
<organism>
    <name type="scientific">Homo sapiens</name>
    <name type="common">Human</name>
    <dbReference type="NCBI Taxonomy" id="9606"/>
    <lineage>
        <taxon>Eukaryota</taxon>
        <taxon>Metazoa</taxon>
        <taxon>Chordata</taxon>
        <taxon>Craniata</taxon>
        <taxon>Vertebrata</taxon>
        <taxon>Euteleostomi</taxon>
        <taxon>Mammalia</taxon>
        <taxon>Eutheria</taxon>
        <taxon>Euarchontoglires</taxon>
        <taxon>Primates</taxon>
        <taxon>Haplorrhini</taxon>
        <taxon>Catarrhini</taxon>
        <taxon>Hominidae</taxon>
        <taxon>Homo</taxon>
    </lineage>
</organism>
<name>NKX23_HUMAN</name>
<dbReference type="EMBL" id="AK300856">
    <property type="protein sequence ID" value="BAG62506.1"/>
    <property type="molecule type" value="mRNA"/>
</dbReference>
<dbReference type="EMBL" id="AL353719">
    <property type="status" value="NOT_ANNOTATED_CDS"/>
    <property type="molecule type" value="Genomic_DNA"/>
</dbReference>
<dbReference type="EMBL" id="BC025788">
    <property type="protein sequence ID" value="AAH25788.1"/>
    <property type="status" value="ALT_SEQ"/>
    <property type="molecule type" value="mRNA"/>
</dbReference>
<dbReference type="EMBL" id="AH009193">
    <property type="protein sequence ID" value="AAF44651.1"/>
    <property type="molecule type" value="Genomic_DNA"/>
</dbReference>
<dbReference type="CCDS" id="CCDS41558.1"/>
<dbReference type="RefSeq" id="NP_660328.2">
    <property type="nucleotide sequence ID" value="NM_145285.3"/>
</dbReference>
<dbReference type="RefSeq" id="XP_054220898.1">
    <property type="nucleotide sequence ID" value="XM_054364923.1"/>
</dbReference>
<dbReference type="SMR" id="Q8TAU0"/>
<dbReference type="BioGRID" id="127740">
    <property type="interactions" value="4"/>
</dbReference>
<dbReference type="FunCoup" id="Q8TAU0">
    <property type="interactions" value="351"/>
</dbReference>
<dbReference type="IntAct" id="Q8TAU0">
    <property type="interactions" value="2"/>
</dbReference>
<dbReference type="STRING" id="9606.ENSP00000342828"/>
<dbReference type="GlyGen" id="Q8TAU0">
    <property type="glycosylation" value="1 site"/>
</dbReference>
<dbReference type="PhosphoSitePlus" id="Q8TAU0"/>
<dbReference type="BioMuta" id="NKX2-3"/>
<dbReference type="DMDM" id="27923815"/>
<dbReference type="jPOST" id="Q8TAU0"/>
<dbReference type="MassIVE" id="Q8TAU0"/>
<dbReference type="PaxDb" id="9606-ENSP00000342828"/>
<dbReference type="PeptideAtlas" id="Q8TAU0"/>
<dbReference type="ProteomicsDB" id="73920"/>
<dbReference type="Antibodypedia" id="31083">
    <property type="antibodies" value="86 antibodies from 24 providers"/>
</dbReference>
<dbReference type="DNASU" id="159296"/>
<dbReference type="Ensembl" id="ENST00000344586.9">
    <property type="protein sequence ID" value="ENSP00000342828.7"/>
    <property type="gene ID" value="ENSG00000119919.12"/>
</dbReference>
<dbReference type="GeneID" id="159296"/>
<dbReference type="KEGG" id="hsa:159296"/>
<dbReference type="MANE-Select" id="ENST00000344586.9">
    <property type="protein sequence ID" value="ENSP00000342828.7"/>
    <property type="RefSeq nucleotide sequence ID" value="NM_145285.3"/>
    <property type="RefSeq protein sequence ID" value="NP_660328.2"/>
</dbReference>
<dbReference type="UCSC" id="uc009xwj.4">
    <property type="organism name" value="human"/>
</dbReference>
<dbReference type="AGR" id="HGNC:7836"/>
<dbReference type="CTD" id="159296"/>
<dbReference type="DisGeNET" id="159296"/>
<dbReference type="GeneCards" id="NKX2-3"/>
<dbReference type="HGNC" id="HGNC:7836">
    <property type="gene designation" value="NKX2-3"/>
</dbReference>
<dbReference type="HPA" id="ENSG00000119919">
    <property type="expression patterns" value="Group enriched (intestine, lymphoid tissue)"/>
</dbReference>
<dbReference type="MalaCards" id="NKX2-3"/>
<dbReference type="MIM" id="606727">
    <property type="type" value="gene"/>
</dbReference>
<dbReference type="neXtProt" id="NX_Q8TAU0"/>
<dbReference type="OpenTargets" id="ENSG00000119919"/>
<dbReference type="PharmGKB" id="PA31643"/>
<dbReference type="VEuPathDB" id="HostDB:ENSG00000119919"/>
<dbReference type="eggNOG" id="KOG0842">
    <property type="taxonomic scope" value="Eukaryota"/>
</dbReference>
<dbReference type="GeneTree" id="ENSGT00940000157556"/>
<dbReference type="InParanoid" id="Q8TAU0"/>
<dbReference type="OMA" id="QKSCPLK"/>
<dbReference type="OrthoDB" id="6159439at2759"/>
<dbReference type="PAN-GO" id="Q8TAU0">
    <property type="GO annotations" value="5 GO annotations based on evolutionary models"/>
</dbReference>
<dbReference type="PhylomeDB" id="Q8TAU0"/>
<dbReference type="TreeFam" id="TF351204"/>
<dbReference type="PathwayCommons" id="Q8TAU0"/>
<dbReference type="SignaLink" id="Q8TAU0"/>
<dbReference type="SIGNOR" id="Q8TAU0"/>
<dbReference type="BioGRID-ORCS" id="159296">
    <property type="hits" value="15 hits in 1155 CRISPR screens"/>
</dbReference>
<dbReference type="GeneWiki" id="NKX2-3"/>
<dbReference type="GenomeRNAi" id="159296"/>
<dbReference type="Pharos" id="Q8TAU0">
    <property type="development level" value="Tbio"/>
</dbReference>
<dbReference type="PRO" id="PR:Q8TAU0"/>
<dbReference type="Proteomes" id="UP000005640">
    <property type="component" value="Chromosome 10"/>
</dbReference>
<dbReference type="RNAct" id="Q8TAU0">
    <property type="molecule type" value="protein"/>
</dbReference>
<dbReference type="Bgee" id="ENSG00000119919">
    <property type="expression patterns" value="Expressed in muscle layer of sigmoid colon and 43 other cell types or tissues"/>
</dbReference>
<dbReference type="ExpressionAtlas" id="Q8TAU0">
    <property type="expression patterns" value="baseline and differential"/>
</dbReference>
<dbReference type="GO" id="GO:0000785">
    <property type="term" value="C:chromatin"/>
    <property type="evidence" value="ECO:0000247"/>
    <property type="project" value="NTNU_SB"/>
</dbReference>
<dbReference type="GO" id="GO:0005634">
    <property type="term" value="C:nucleus"/>
    <property type="evidence" value="ECO:0000318"/>
    <property type="project" value="GO_Central"/>
</dbReference>
<dbReference type="GO" id="GO:0000981">
    <property type="term" value="F:DNA-binding transcription factor activity, RNA polymerase II-specific"/>
    <property type="evidence" value="ECO:0000247"/>
    <property type="project" value="NTNU_SB"/>
</dbReference>
<dbReference type="GO" id="GO:0000978">
    <property type="term" value="F:RNA polymerase II cis-regulatory region sequence-specific DNA binding"/>
    <property type="evidence" value="ECO:0000318"/>
    <property type="project" value="GO_Central"/>
</dbReference>
<dbReference type="GO" id="GO:1990837">
    <property type="term" value="F:sequence-specific double-stranded DNA binding"/>
    <property type="evidence" value="ECO:0000314"/>
    <property type="project" value="ARUK-UCL"/>
</dbReference>
<dbReference type="GO" id="GO:0043367">
    <property type="term" value="P:CD4-positive, alpha-beta T cell differentiation"/>
    <property type="evidence" value="ECO:0007669"/>
    <property type="project" value="Ensembl"/>
</dbReference>
<dbReference type="GO" id="GO:0030154">
    <property type="term" value="P:cell differentiation"/>
    <property type="evidence" value="ECO:0000318"/>
    <property type="project" value="GO_Central"/>
</dbReference>
<dbReference type="GO" id="GO:0001708">
    <property type="term" value="P:cell fate specification"/>
    <property type="evidence" value="ECO:0007669"/>
    <property type="project" value="Ensembl"/>
</dbReference>
<dbReference type="GO" id="GO:0022612">
    <property type="term" value="P:gland morphogenesis"/>
    <property type="evidence" value="ECO:0007669"/>
    <property type="project" value="Ensembl"/>
</dbReference>
<dbReference type="GO" id="GO:0001776">
    <property type="term" value="P:leukocyte homeostasis"/>
    <property type="evidence" value="ECO:0007669"/>
    <property type="project" value="Ensembl"/>
</dbReference>
<dbReference type="GO" id="GO:0050900">
    <property type="term" value="P:leukocyte migration"/>
    <property type="evidence" value="ECO:0007669"/>
    <property type="project" value="Ensembl"/>
</dbReference>
<dbReference type="GO" id="GO:0048535">
    <property type="term" value="P:lymph node development"/>
    <property type="evidence" value="ECO:0007669"/>
    <property type="project" value="Ensembl"/>
</dbReference>
<dbReference type="GO" id="GO:0030225">
    <property type="term" value="P:macrophage differentiation"/>
    <property type="evidence" value="ECO:0007669"/>
    <property type="project" value="Ensembl"/>
</dbReference>
<dbReference type="GO" id="GO:0042475">
    <property type="term" value="P:odontogenesis of dentin-containing tooth"/>
    <property type="evidence" value="ECO:0007669"/>
    <property type="project" value="Ensembl"/>
</dbReference>
<dbReference type="GO" id="GO:0048541">
    <property type="term" value="P:Peyer's patch development"/>
    <property type="evidence" value="ECO:0007669"/>
    <property type="project" value="Ensembl"/>
</dbReference>
<dbReference type="GO" id="GO:0002317">
    <property type="term" value="P:plasma cell differentiation"/>
    <property type="evidence" value="ECO:0007669"/>
    <property type="project" value="Ensembl"/>
</dbReference>
<dbReference type="GO" id="GO:0045944">
    <property type="term" value="P:positive regulation of transcription by RNA polymerase II"/>
    <property type="evidence" value="ECO:0007669"/>
    <property type="project" value="Ensembl"/>
</dbReference>
<dbReference type="GO" id="GO:0048621">
    <property type="term" value="P:post-embryonic digestive tract morphogenesis"/>
    <property type="evidence" value="ECO:0007669"/>
    <property type="project" value="Ensembl"/>
</dbReference>
<dbReference type="GO" id="GO:0050678">
    <property type="term" value="P:regulation of epithelial cell proliferation"/>
    <property type="evidence" value="ECO:0007669"/>
    <property type="project" value="Ensembl"/>
</dbReference>
<dbReference type="GO" id="GO:0006357">
    <property type="term" value="P:regulation of transcription by RNA polymerase II"/>
    <property type="evidence" value="ECO:0000318"/>
    <property type="project" value="GO_Central"/>
</dbReference>
<dbReference type="GO" id="GO:0046541">
    <property type="term" value="P:saliva secretion"/>
    <property type="evidence" value="ECO:0007669"/>
    <property type="project" value="Ensembl"/>
</dbReference>
<dbReference type="GO" id="GO:0048536">
    <property type="term" value="P:spleen development"/>
    <property type="evidence" value="ECO:0007669"/>
    <property type="project" value="Ensembl"/>
</dbReference>
<dbReference type="GO" id="GO:0006366">
    <property type="term" value="P:transcription by RNA polymerase II"/>
    <property type="evidence" value="ECO:0007669"/>
    <property type="project" value="Ensembl"/>
</dbReference>
<dbReference type="GO" id="GO:0006641">
    <property type="term" value="P:triglyceride metabolic process"/>
    <property type="evidence" value="ECO:0007669"/>
    <property type="project" value="Ensembl"/>
</dbReference>
<dbReference type="CDD" id="cd00086">
    <property type="entry name" value="homeodomain"/>
    <property type="match status" value="1"/>
</dbReference>
<dbReference type="FunFam" id="1.10.10.60:FF:000078">
    <property type="entry name" value="NK2 homeobox 3"/>
    <property type="match status" value="1"/>
</dbReference>
<dbReference type="Gene3D" id="1.10.10.60">
    <property type="entry name" value="Homeodomain-like"/>
    <property type="match status" value="1"/>
</dbReference>
<dbReference type="InterPro" id="IPR001356">
    <property type="entry name" value="HD"/>
</dbReference>
<dbReference type="InterPro" id="IPR020479">
    <property type="entry name" value="HD_metazoa"/>
</dbReference>
<dbReference type="InterPro" id="IPR017970">
    <property type="entry name" value="Homeobox_CS"/>
</dbReference>
<dbReference type="InterPro" id="IPR050394">
    <property type="entry name" value="Homeobox_NK-like"/>
</dbReference>
<dbReference type="InterPro" id="IPR009057">
    <property type="entry name" value="Homeodomain-like_sf"/>
</dbReference>
<dbReference type="PANTHER" id="PTHR24340">
    <property type="entry name" value="HOMEOBOX PROTEIN NKX"/>
    <property type="match status" value="1"/>
</dbReference>
<dbReference type="PANTHER" id="PTHR24340:SF32">
    <property type="entry name" value="HOMEOBOX PROTEIN NKX-2.3"/>
    <property type="match status" value="1"/>
</dbReference>
<dbReference type="Pfam" id="PF00046">
    <property type="entry name" value="Homeodomain"/>
    <property type="match status" value="1"/>
</dbReference>
<dbReference type="PRINTS" id="PR00024">
    <property type="entry name" value="HOMEOBOX"/>
</dbReference>
<dbReference type="SMART" id="SM00389">
    <property type="entry name" value="HOX"/>
    <property type="match status" value="1"/>
</dbReference>
<dbReference type="SUPFAM" id="SSF46689">
    <property type="entry name" value="Homeodomain-like"/>
    <property type="match status" value="1"/>
</dbReference>
<dbReference type="PROSITE" id="PS00027">
    <property type="entry name" value="HOMEOBOX_1"/>
    <property type="match status" value="1"/>
</dbReference>
<dbReference type="PROSITE" id="PS50071">
    <property type="entry name" value="HOMEOBOX_2"/>
    <property type="match status" value="1"/>
</dbReference>
<proteinExistence type="evidence at protein level"/>
<sequence>MMLPSPVTSTPFSVKDILNLEQQHQHFHGAHLQADLEHHFHSAPCMLAAAEGTQFSDGGEEDEEDEGEKLSYLNSLAAADGHGDSGLCPQGYVHTVLRDSCSEPKEHEEEPEVVRDRSQKSCQLKKSLETAGDCKAAEESERPKPRSRRKPRVLFSQAQVFELERRFKQQRYLSAPEREHLASSLKLTSTQVKIWFQNRRYKCKRQRQDKSLELGAHAPPPPPRRVAVPVLVRDGKPCVTPSAQAYGAPYSVGASAYSYNSFPAYGYGNSAAAAAAAAAAAAAAAAYSSSYGCAYPAGGGGGGGGTSAATTAMQPACSAAGGGPFVNVSNLGGFGSGGSAQPLHQGTAAGAACAQGTLQGIRAW</sequence>
<gene>
    <name type="primary">NKX2-3</name>
    <name type="synonym">NKX23</name>
    <name type="synonym">NKX2C</name>
</gene>
<evidence type="ECO:0000250" key="1"/>
<evidence type="ECO:0000255" key="2">
    <source>
        <dbReference type="PROSITE-ProRule" id="PRU00108"/>
    </source>
</evidence>
<evidence type="ECO:0000256" key="3">
    <source>
        <dbReference type="SAM" id="MobiDB-lite"/>
    </source>
</evidence>
<evidence type="ECO:0000305" key="4"/>
<accession>Q8TAU0</accession>
<accession>B4DUZ4</accession>
<accession>Q9NYS6</accession>
<reference key="1">
    <citation type="journal article" date="2004" name="Nat. Genet.">
        <title>Complete sequencing and characterization of 21,243 full-length human cDNAs.</title>
        <authorList>
            <person name="Ota T."/>
            <person name="Suzuki Y."/>
            <person name="Nishikawa T."/>
            <person name="Otsuki T."/>
            <person name="Sugiyama T."/>
            <person name="Irie R."/>
            <person name="Wakamatsu A."/>
            <person name="Hayashi K."/>
            <person name="Sato H."/>
            <person name="Nagai K."/>
            <person name="Kimura K."/>
            <person name="Makita H."/>
            <person name="Sekine M."/>
            <person name="Obayashi M."/>
            <person name="Nishi T."/>
            <person name="Shibahara T."/>
            <person name="Tanaka T."/>
            <person name="Ishii S."/>
            <person name="Yamamoto J."/>
            <person name="Saito K."/>
            <person name="Kawai Y."/>
            <person name="Isono Y."/>
            <person name="Nakamura Y."/>
            <person name="Nagahari K."/>
            <person name="Murakami K."/>
            <person name="Yasuda T."/>
            <person name="Iwayanagi T."/>
            <person name="Wagatsuma M."/>
            <person name="Shiratori A."/>
            <person name="Sudo H."/>
            <person name="Hosoiri T."/>
            <person name="Kaku Y."/>
            <person name="Kodaira H."/>
            <person name="Kondo H."/>
            <person name="Sugawara M."/>
            <person name="Takahashi M."/>
            <person name="Kanda K."/>
            <person name="Yokoi T."/>
            <person name="Furuya T."/>
            <person name="Kikkawa E."/>
            <person name="Omura Y."/>
            <person name="Abe K."/>
            <person name="Kamihara K."/>
            <person name="Katsuta N."/>
            <person name="Sato K."/>
            <person name="Tanikawa M."/>
            <person name="Yamazaki M."/>
            <person name="Ninomiya K."/>
            <person name="Ishibashi T."/>
            <person name="Yamashita H."/>
            <person name="Murakawa K."/>
            <person name="Fujimori K."/>
            <person name="Tanai H."/>
            <person name="Kimata M."/>
            <person name="Watanabe M."/>
            <person name="Hiraoka S."/>
            <person name="Chiba Y."/>
            <person name="Ishida S."/>
            <person name="Ono Y."/>
            <person name="Takiguchi S."/>
            <person name="Watanabe S."/>
            <person name="Yosida M."/>
            <person name="Hotuta T."/>
            <person name="Kusano J."/>
            <person name="Kanehori K."/>
            <person name="Takahashi-Fujii A."/>
            <person name="Hara H."/>
            <person name="Tanase T.-O."/>
            <person name="Nomura Y."/>
            <person name="Togiya S."/>
            <person name="Komai F."/>
            <person name="Hara R."/>
            <person name="Takeuchi K."/>
            <person name="Arita M."/>
            <person name="Imose N."/>
            <person name="Musashino K."/>
            <person name="Yuuki H."/>
            <person name="Oshima A."/>
            <person name="Sasaki N."/>
            <person name="Aotsuka S."/>
            <person name="Yoshikawa Y."/>
            <person name="Matsunawa H."/>
            <person name="Ichihara T."/>
            <person name="Shiohata N."/>
            <person name="Sano S."/>
            <person name="Moriya S."/>
            <person name="Momiyama H."/>
            <person name="Satoh N."/>
            <person name="Takami S."/>
            <person name="Terashima Y."/>
            <person name="Suzuki O."/>
            <person name="Nakagawa S."/>
            <person name="Senoh A."/>
            <person name="Mizoguchi H."/>
            <person name="Goto Y."/>
            <person name="Shimizu F."/>
            <person name="Wakebe H."/>
            <person name="Hishigaki H."/>
            <person name="Watanabe T."/>
            <person name="Sugiyama A."/>
            <person name="Takemoto M."/>
            <person name="Kawakami B."/>
            <person name="Yamazaki M."/>
            <person name="Watanabe K."/>
            <person name="Kumagai A."/>
            <person name="Itakura S."/>
            <person name="Fukuzumi Y."/>
            <person name="Fujimori Y."/>
            <person name="Komiyama M."/>
            <person name="Tashiro H."/>
            <person name="Tanigami A."/>
            <person name="Fujiwara T."/>
            <person name="Ono T."/>
            <person name="Yamada K."/>
            <person name="Fujii Y."/>
            <person name="Ozaki K."/>
            <person name="Hirao M."/>
            <person name="Ohmori Y."/>
            <person name="Kawabata A."/>
            <person name="Hikiji T."/>
            <person name="Kobatake N."/>
            <person name="Inagaki H."/>
            <person name="Ikema Y."/>
            <person name="Okamoto S."/>
            <person name="Okitani R."/>
            <person name="Kawakami T."/>
            <person name="Noguchi S."/>
            <person name="Itoh T."/>
            <person name="Shigeta K."/>
            <person name="Senba T."/>
            <person name="Matsumura K."/>
            <person name="Nakajima Y."/>
            <person name="Mizuno T."/>
            <person name="Morinaga M."/>
            <person name="Sasaki M."/>
            <person name="Togashi T."/>
            <person name="Oyama M."/>
            <person name="Hata H."/>
            <person name="Watanabe M."/>
            <person name="Komatsu T."/>
            <person name="Mizushima-Sugano J."/>
            <person name="Satoh T."/>
            <person name="Shirai Y."/>
            <person name="Takahashi Y."/>
            <person name="Nakagawa K."/>
            <person name="Okumura K."/>
            <person name="Nagase T."/>
            <person name="Nomura N."/>
            <person name="Kikuchi H."/>
            <person name="Masuho Y."/>
            <person name="Yamashita R."/>
            <person name="Nakai K."/>
            <person name="Yada T."/>
            <person name="Nakamura Y."/>
            <person name="Ohara O."/>
            <person name="Isogai T."/>
            <person name="Sugano S."/>
        </authorList>
    </citation>
    <scope>NUCLEOTIDE SEQUENCE [LARGE SCALE MRNA]</scope>
    <source>
        <tissue>Small intestine</tissue>
    </source>
</reference>
<reference key="2">
    <citation type="journal article" date="2004" name="Nature">
        <title>The DNA sequence and comparative analysis of human chromosome 10.</title>
        <authorList>
            <person name="Deloukas P."/>
            <person name="Earthrowl M.E."/>
            <person name="Grafham D.V."/>
            <person name="Rubenfield M."/>
            <person name="French L."/>
            <person name="Steward C.A."/>
            <person name="Sims S.K."/>
            <person name="Jones M.C."/>
            <person name="Searle S."/>
            <person name="Scott C."/>
            <person name="Howe K."/>
            <person name="Hunt S.E."/>
            <person name="Andrews T.D."/>
            <person name="Gilbert J.G.R."/>
            <person name="Swarbreck D."/>
            <person name="Ashurst J.L."/>
            <person name="Taylor A."/>
            <person name="Battles J."/>
            <person name="Bird C.P."/>
            <person name="Ainscough R."/>
            <person name="Almeida J.P."/>
            <person name="Ashwell R.I.S."/>
            <person name="Ambrose K.D."/>
            <person name="Babbage A.K."/>
            <person name="Bagguley C.L."/>
            <person name="Bailey J."/>
            <person name="Banerjee R."/>
            <person name="Bates K."/>
            <person name="Beasley H."/>
            <person name="Bray-Allen S."/>
            <person name="Brown A.J."/>
            <person name="Brown J.Y."/>
            <person name="Burford D.C."/>
            <person name="Burrill W."/>
            <person name="Burton J."/>
            <person name="Cahill P."/>
            <person name="Camire D."/>
            <person name="Carter N.P."/>
            <person name="Chapman J.C."/>
            <person name="Clark S.Y."/>
            <person name="Clarke G."/>
            <person name="Clee C.M."/>
            <person name="Clegg S."/>
            <person name="Corby N."/>
            <person name="Coulson A."/>
            <person name="Dhami P."/>
            <person name="Dutta I."/>
            <person name="Dunn M."/>
            <person name="Faulkner L."/>
            <person name="Frankish A."/>
            <person name="Frankland J.A."/>
            <person name="Garner P."/>
            <person name="Garnett J."/>
            <person name="Gribble S."/>
            <person name="Griffiths C."/>
            <person name="Grocock R."/>
            <person name="Gustafson E."/>
            <person name="Hammond S."/>
            <person name="Harley J.L."/>
            <person name="Hart E."/>
            <person name="Heath P.D."/>
            <person name="Ho T.P."/>
            <person name="Hopkins B."/>
            <person name="Horne J."/>
            <person name="Howden P.J."/>
            <person name="Huckle E."/>
            <person name="Hynds C."/>
            <person name="Johnson C."/>
            <person name="Johnson D."/>
            <person name="Kana A."/>
            <person name="Kay M."/>
            <person name="Kimberley A.M."/>
            <person name="Kershaw J.K."/>
            <person name="Kokkinaki M."/>
            <person name="Laird G.K."/>
            <person name="Lawlor S."/>
            <person name="Lee H.M."/>
            <person name="Leongamornlert D.A."/>
            <person name="Laird G."/>
            <person name="Lloyd C."/>
            <person name="Lloyd D.M."/>
            <person name="Loveland J."/>
            <person name="Lovell J."/>
            <person name="McLaren S."/>
            <person name="McLay K.E."/>
            <person name="McMurray A."/>
            <person name="Mashreghi-Mohammadi M."/>
            <person name="Matthews L."/>
            <person name="Milne S."/>
            <person name="Nickerson T."/>
            <person name="Nguyen M."/>
            <person name="Overton-Larty E."/>
            <person name="Palmer S.A."/>
            <person name="Pearce A.V."/>
            <person name="Peck A.I."/>
            <person name="Pelan S."/>
            <person name="Phillimore B."/>
            <person name="Porter K."/>
            <person name="Rice C.M."/>
            <person name="Rogosin A."/>
            <person name="Ross M.T."/>
            <person name="Sarafidou T."/>
            <person name="Sehra H.K."/>
            <person name="Shownkeen R."/>
            <person name="Skuce C.D."/>
            <person name="Smith M."/>
            <person name="Standring L."/>
            <person name="Sycamore N."/>
            <person name="Tester J."/>
            <person name="Thorpe A."/>
            <person name="Torcasso W."/>
            <person name="Tracey A."/>
            <person name="Tromans A."/>
            <person name="Tsolas J."/>
            <person name="Wall M."/>
            <person name="Walsh J."/>
            <person name="Wang H."/>
            <person name="Weinstock K."/>
            <person name="West A.P."/>
            <person name="Willey D.L."/>
            <person name="Whitehead S.L."/>
            <person name="Wilming L."/>
            <person name="Wray P.W."/>
            <person name="Young L."/>
            <person name="Chen Y."/>
            <person name="Lovering R.C."/>
            <person name="Moschonas N.K."/>
            <person name="Siebert R."/>
            <person name="Fechtel K."/>
            <person name="Bentley D."/>
            <person name="Durbin R.M."/>
            <person name="Hubbard T."/>
            <person name="Doucette-Stamm L."/>
            <person name="Beck S."/>
            <person name="Smith D.R."/>
            <person name="Rogers J."/>
        </authorList>
    </citation>
    <scope>NUCLEOTIDE SEQUENCE [LARGE SCALE GENOMIC DNA]</scope>
</reference>
<reference key="3">
    <citation type="journal article" date="2004" name="Genome Res.">
        <title>The status, quality, and expansion of the NIH full-length cDNA project: the Mammalian Gene Collection (MGC).</title>
        <authorList>
            <consortium name="The MGC Project Team"/>
        </authorList>
    </citation>
    <scope>NUCLEOTIDE SEQUENCE [LARGE SCALE MRNA]</scope>
    <source>
        <tissue>Pancreas</tissue>
        <tissue>Spleen</tissue>
    </source>
</reference>
<reference key="4">
    <citation type="submission" date="2000-01" db="EMBL/GenBank/DDBJ databases">
        <title>Homeobox gene Nkx2-3 is critical for normal development of the gut, spleen and gut-associated lymphoid tissue.</title>
        <authorList>
            <person name="Wang C.-C."/>
            <person name="Brodnicki T."/>
            <person name="Harvey R.P."/>
        </authorList>
    </citation>
    <scope>NUCLEOTIDE SEQUENCE [GENOMIC DNA] OF 1-211</scope>
</reference>